<protein>
    <recommendedName>
        <fullName>Gastrin-releasing peptide</fullName>
        <shortName>GRP</shortName>
    </recommendedName>
    <component>
        <recommendedName>
            <fullName>Neuromedin-C</fullName>
        </recommendedName>
        <alternativeName>
            <fullName>GRP-10</fullName>
        </alternativeName>
        <alternativeName>
            <fullName evidence="5">GRP18-27</fullName>
        </alternativeName>
    </component>
</protein>
<feature type="signal peptide" evidence="2">
    <location>
        <begin position="1"/>
        <end position="23"/>
    </location>
</feature>
<feature type="peptide" id="PRO_0000003039" description="Gastrin-releasing peptide" evidence="2">
    <location>
        <begin position="24"/>
        <end position="52"/>
    </location>
</feature>
<feature type="peptide" id="PRO_0000003040" description="Neuromedin-C" evidence="4">
    <location>
        <begin position="43"/>
        <end position="52"/>
    </location>
</feature>
<feature type="propeptide" id="PRO_0000003041" evidence="2">
    <location>
        <begin position="56"/>
        <end position="147"/>
    </location>
</feature>
<feature type="region of interest" description="Disordered" evidence="6">
    <location>
        <begin position="95"/>
        <end position="123"/>
    </location>
</feature>
<feature type="compositionally biased region" description="Polar residues" evidence="6">
    <location>
        <begin position="98"/>
        <end position="113"/>
    </location>
</feature>
<feature type="modified residue" description="Methionine amide" evidence="3">
    <location>
        <position position="52"/>
    </location>
</feature>
<feature type="sequence conflict" description="In Ref. 1; AAA41197." ref="1">
    <original>AG</original>
    <variation>SR</variation>
    <location>
        <begin position="95"/>
        <end position="96"/>
    </location>
</feature>
<comment type="function">
    <text evidence="3 5 7 9">Stimulates the release of gastrin and other gastrointestinal hormones (By similarity). Contributes to the perception of prurient stimuli and to the transmission of itch signals in the spinal cord that promote scratching behavior (By similarity). Contributes primarily to nonhistaminergic itch sensation (By similarity). In one study, shown to act in the amygdala as part of an inhibitory network which inhibits memory specifically related to learned fear (By similarity). In another study, shown to act on vasoactive intestinal peptide (VIP)-expressing cells in the auditory cortex, most likely via extrasynaptic diffusion from local and long-range sources, to mediate disinhibition of glutamatergic cells via VIP cell-specific GRPR signaling which leads to enhanced auditory fear memories (By similarity). Contributes to the regulation of food intake (PubMed:17208656). Inhibits voltage-gated sodium channels but enhances voltage-gated potassium channels in hippocampal neurons (PubMed:33059246). Induces sighing by acting directly on the pre-Botzinger complex, a cluster of several thousand neurons in the ventrolateral medulla responsible for inspiration during respiratory activity (By similarity).</text>
</comment>
<comment type="function">
    <molecule>Neuromedin-C</molecule>
    <text evidence="5">Induces an itch response through activation of receptors present on mast cells, triggering mast cell degranulation.</text>
</comment>
<comment type="subcellular location">
    <subcellularLocation>
        <location evidence="1">Secreted</location>
    </subcellularLocation>
    <subcellularLocation>
        <location evidence="4">Cytoplasmic vesicle</location>
        <location evidence="4">Secretory vesicle lumen</location>
    </subcellularLocation>
    <subcellularLocation>
        <location evidence="5">Cell projection</location>
        <location evidence="5">Neuron projection</location>
    </subcellularLocation>
    <text evidence="5">In neurons of the retrotrapezoid nucleus/parafacial respiratory group, expressed on neuron projections which project into the pre-Botzinger complex.</text>
</comment>
<comment type="tissue specificity">
    <text evidence="8">Expressed in several dozen cells in the dorsal retrotrapezoid nucleus/parafacial respiratory group (at protein level).</text>
</comment>
<comment type="similarity">
    <text evidence="10">Belongs to the bombesin/neuromedin-B/ranatensin family.</text>
</comment>
<dbReference type="EMBL" id="M31176">
    <property type="protein sequence ID" value="AAA41197.1"/>
    <property type="molecule type" value="mRNA"/>
</dbReference>
<dbReference type="EMBL" id="AABR07032332">
    <property type="status" value="NOT_ANNOTATED_CDS"/>
    <property type="molecule type" value="Genomic_DNA"/>
</dbReference>
<dbReference type="EMBL" id="CH473971">
    <property type="protein sequence ID" value="EDM14697.1"/>
    <property type="molecule type" value="Genomic_DNA"/>
</dbReference>
<dbReference type="EMBL" id="CH473971">
    <property type="protein sequence ID" value="EDM14698.1"/>
    <property type="molecule type" value="Genomic_DNA"/>
</dbReference>
<dbReference type="PIR" id="A40922">
    <property type="entry name" value="A40922"/>
</dbReference>
<dbReference type="RefSeq" id="NP_598254.2">
    <property type="nucleotide sequence ID" value="NM_133570.5"/>
</dbReference>
<dbReference type="FunCoup" id="P24393">
    <property type="interactions" value="32"/>
</dbReference>
<dbReference type="STRING" id="10116.ENSRNOP00000022845"/>
<dbReference type="PhosphoSitePlus" id="P24393"/>
<dbReference type="PaxDb" id="10116-ENSRNOP00000022845"/>
<dbReference type="Ensembl" id="ENSRNOT00000022845.3">
    <property type="protein sequence ID" value="ENSRNOP00000022845.1"/>
    <property type="gene ID" value="ENSRNOG00000016999.3"/>
</dbReference>
<dbReference type="GeneID" id="171101"/>
<dbReference type="KEGG" id="rno:171101"/>
<dbReference type="UCSC" id="RGD:621740">
    <property type="organism name" value="rat"/>
</dbReference>
<dbReference type="AGR" id="RGD:621740"/>
<dbReference type="CTD" id="2922"/>
<dbReference type="RGD" id="621740">
    <property type="gene designation" value="Grp"/>
</dbReference>
<dbReference type="eggNOG" id="ENOG502S4DG">
    <property type="taxonomic scope" value="Eukaryota"/>
</dbReference>
<dbReference type="GeneTree" id="ENSGT00940000154470"/>
<dbReference type="InParanoid" id="P24393"/>
<dbReference type="OMA" id="KDMMDYL"/>
<dbReference type="OrthoDB" id="55880at9989"/>
<dbReference type="PhylomeDB" id="P24393"/>
<dbReference type="TreeFam" id="TF336391"/>
<dbReference type="Reactome" id="R-RNO-375276">
    <property type="pathway name" value="Peptide ligand-binding receptors"/>
</dbReference>
<dbReference type="Reactome" id="R-RNO-381771">
    <property type="pathway name" value="Synthesis, secretion, and inactivation of Glucagon-like Peptide-1 (GLP-1)"/>
</dbReference>
<dbReference type="Reactome" id="R-RNO-416476">
    <property type="pathway name" value="G alpha (q) signalling events"/>
</dbReference>
<dbReference type="PRO" id="PR:P24393"/>
<dbReference type="Proteomes" id="UP000002494">
    <property type="component" value="Chromosome 18"/>
</dbReference>
<dbReference type="Proteomes" id="UP000234681">
    <property type="component" value="Chromosome 18"/>
</dbReference>
<dbReference type="Bgee" id="ENSRNOG00000016999">
    <property type="expression patterns" value="Expressed in stomach and 9 other cell types or tissues"/>
</dbReference>
<dbReference type="GO" id="GO:0005576">
    <property type="term" value="C:extracellular region"/>
    <property type="evidence" value="ECO:0000314"/>
    <property type="project" value="RGD"/>
</dbReference>
<dbReference type="GO" id="GO:0005615">
    <property type="term" value="C:extracellular space"/>
    <property type="evidence" value="ECO:0000314"/>
    <property type="project" value="RGD"/>
</dbReference>
<dbReference type="GO" id="GO:0043005">
    <property type="term" value="C:neuron projection"/>
    <property type="evidence" value="ECO:0000250"/>
    <property type="project" value="UniProtKB"/>
</dbReference>
<dbReference type="GO" id="GO:0098992">
    <property type="term" value="C:neuronal dense core vesicle"/>
    <property type="evidence" value="ECO:0000314"/>
    <property type="project" value="SynGO"/>
</dbReference>
<dbReference type="GO" id="GO:0034774">
    <property type="term" value="C:secretory granule lumen"/>
    <property type="evidence" value="ECO:0000250"/>
    <property type="project" value="UniProtKB"/>
</dbReference>
<dbReference type="GO" id="GO:0005184">
    <property type="term" value="F:neuropeptide hormone activity"/>
    <property type="evidence" value="ECO:0000266"/>
    <property type="project" value="RGD"/>
</dbReference>
<dbReference type="GO" id="GO:1904384">
    <property type="term" value="P:cellular response to sodium phosphate"/>
    <property type="evidence" value="ECO:0000270"/>
    <property type="project" value="RGD"/>
</dbReference>
<dbReference type="GO" id="GO:0043303">
    <property type="term" value="P:mast cell degranulation"/>
    <property type="evidence" value="ECO:0000250"/>
    <property type="project" value="UniProtKB"/>
</dbReference>
<dbReference type="GO" id="GO:1903817">
    <property type="term" value="P:negative regulation of voltage-gated potassium channel activity"/>
    <property type="evidence" value="ECO:0000314"/>
    <property type="project" value="UniProtKB"/>
</dbReference>
<dbReference type="GO" id="GO:1905151">
    <property type="term" value="P:negative regulation of voltage-gated sodium channel activity"/>
    <property type="evidence" value="ECO:0000314"/>
    <property type="project" value="UniProtKB"/>
</dbReference>
<dbReference type="GO" id="GO:0007218">
    <property type="term" value="P:neuropeptide signaling pathway"/>
    <property type="evidence" value="ECO:0000315"/>
    <property type="project" value="RGD"/>
</dbReference>
<dbReference type="GO" id="GO:0001503">
    <property type="term" value="P:ossification"/>
    <property type="evidence" value="ECO:0000315"/>
    <property type="project" value="RGD"/>
</dbReference>
<dbReference type="GO" id="GO:2000987">
    <property type="term" value="P:positive regulation of behavioral fear response"/>
    <property type="evidence" value="ECO:0000250"/>
    <property type="project" value="UniProtKB"/>
</dbReference>
<dbReference type="GO" id="GO:0090277">
    <property type="term" value="P:positive regulation of peptide hormone secretion"/>
    <property type="evidence" value="ECO:0000250"/>
    <property type="project" value="UniProtKB"/>
</dbReference>
<dbReference type="GO" id="GO:1900738">
    <property type="term" value="P:positive regulation of phospholipase C-activating G protein-coupled receptor signaling pathway"/>
    <property type="evidence" value="ECO:0000250"/>
    <property type="project" value="UniProtKB"/>
</dbReference>
<dbReference type="GO" id="GO:1903942">
    <property type="term" value="P:positive regulation of respiratory gaseous exchange"/>
    <property type="evidence" value="ECO:0000250"/>
    <property type="project" value="UniProtKB"/>
</dbReference>
<dbReference type="GO" id="GO:1905461">
    <property type="term" value="P:positive regulation of vascular associated smooth muscle cell apoptotic process"/>
    <property type="evidence" value="ECO:0000315"/>
    <property type="project" value="RGD"/>
</dbReference>
<dbReference type="GO" id="GO:0036343">
    <property type="term" value="P:psychomotor behavior"/>
    <property type="evidence" value="ECO:0000266"/>
    <property type="project" value="RGD"/>
</dbReference>
<dbReference type="GO" id="GO:0010468">
    <property type="term" value="P:regulation of gene expression"/>
    <property type="evidence" value="ECO:0000315"/>
    <property type="project" value="RGD"/>
</dbReference>
<dbReference type="GO" id="GO:0043207">
    <property type="term" value="P:response to external biotic stimulus"/>
    <property type="evidence" value="ECO:0000266"/>
    <property type="project" value="RGD"/>
</dbReference>
<dbReference type="GO" id="GO:0035176">
    <property type="term" value="P:social behavior"/>
    <property type="evidence" value="ECO:0000266"/>
    <property type="project" value="RGD"/>
</dbReference>
<dbReference type="InterPro" id="IPR000874">
    <property type="entry name" value="Bombesin"/>
</dbReference>
<dbReference type="PANTHER" id="PTHR16866">
    <property type="entry name" value="GASTRIN-RELEASING PEPTIDE"/>
    <property type="match status" value="1"/>
</dbReference>
<dbReference type="PANTHER" id="PTHR16866:SF2">
    <property type="entry name" value="GASTRIN-RELEASING PEPTIDE"/>
    <property type="match status" value="1"/>
</dbReference>
<dbReference type="Pfam" id="PF02044">
    <property type="entry name" value="Bombesin"/>
    <property type="match status" value="1"/>
</dbReference>
<dbReference type="PROSITE" id="PS00257">
    <property type="entry name" value="BOMBESIN"/>
    <property type="match status" value="1"/>
</dbReference>
<sequence length="147" mass="15702">MRGSELSLLLLALVLCQAPRGPAAPVSTGAGGGTVLAKMYPRGSHWAVGHLMGKKSTDELPPLYAADRDGLKEQLRGYIRWEEAARNLLGLLEAAGNRSHQPPQDQPLGSLQPTWDPEDGSYFSDAQNAKLVDSLLQVLKGKEGTAS</sequence>
<reference key="1">
    <citation type="journal article" date="1988" name="Mol. Endocrinol.">
        <title>The rat prepro gastrin releasing peptide gene is transcribed from two initiation sites in the brain.</title>
        <authorList>
            <person name="Lebacq-Verheyden A.-M."/>
            <person name="Krystal G."/>
            <person name="Sartor O."/>
            <person name="Way J."/>
            <person name="Battey J.F."/>
        </authorList>
    </citation>
    <scope>NUCLEOTIDE SEQUENCE [MRNA]</scope>
    <source>
        <strain>Sprague-Dawley</strain>
        <tissue>Brain</tissue>
    </source>
</reference>
<reference key="2">
    <citation type="journal article" date="2004" name="Nature">
        <title>Genome sequence of the Brown Norway rat yields insights into mammalian evolution.</title>
        <authorList>
            <person name="Gibbs R.A."/>
            <person name="Weinstock G.M."/>
            <person name="Metzker M.L."/>
            <person name="Muzny D.M."/>
            <person name="Sodergren E.J."/>
            <person name="Scherer S."/>
            <person name="Scott G."/>
            <person name="Steffen D."/>
            <person name="Worley K.C."/>
            <person name="Burch P.E."/>
            <person name="Okwuonu G."/>
            <person name="Hines S."/>
            <person name="Lewis L."/>
            <person name="Deramo C."/>
            <person name="Delgado O."/>
            <person name="Dugan-Rocha S."/>
            <person name="Miner G."/>
            <person name="Morgan M."/>
            <person name="Hawes A."/>
            <person name="Gill R."/>
            <person name="Holt R.A."/>
            <person name="Adams M.D."/>
            <person name="Amanatides P.G."/>
            <person name="Baden-Tillson H."/>
            <person name="Barnstead M."/>
            <person name="Chin S."/>
            <person name="Evans C.A."/>
            <person name="Ferriera S."/>
            <person name="Fosler C."/>
            <person name="Glodek A."/>
            <person name="Gu Z."/>
            <person name="Jennings D."/>
            <person name="Kraft C.L."/>
            <person name="Nguyen T."/>
            <person name="Pfannkoch C.M."/>
            <person name="Sitter C."/>
            <person name="Sutton G.G."/>
            <person name="Venter J.C."/>
            <person name="Woodage T."/>
            <person name="Smith D."/>
            <person name="Lee H.-M."/>
            <person name="Gustafson E."/>
            <person name="Cahill P."/>
            <person name="Kana A."/>
            <person name="Doucette-Stamm L."/>
            <person name="Weinstock K."/>
            <person name="Fechtel K."/>
            <person name="Weiss R.B."/>
            <person name="Dunn D.M."/>
            <person name="Green E.D."/>
            <person name="Blakesley R.W."/>
            <person name="Bouffard G.G."/>
            <person name="De Jong P.J."/>
            <person name="Osoegawa K."/>
            <person name="Zhu B."/>
            <person name="Marra M."/>
            <person name="Schein J."/>
            <person name="Bosdet I."/>
            <person name="Fjell C."/>
            <person name="Jones S."/>
            <person name="Krzywinski M."/>
            <person name="Mathewson C."/>
            <person name="Siddiqui A."/>
            <person name="Wye N."/>
            <person name="McPherson J."/>
            <person name="Zhao S."/>
            <person name="Fraser C.M."/>
            <person name="Shetty J."/>
            <person name="Shatsman S."/>
            <person name="Geer K."/>
            <person name="Chen Y."/>
            <person name="Abramzon S."/>
            <person name="Nierman W.C."/>
            <person name="Havlak P.H."/>
            <person name="Chen R."/>
            <person name="Durbin K.J."/>
            <person name="Egan A."/>
            <person name="Ren Y."/>
            <person name="Song X.-Z."/>
            <person name="Li B."/>
            <person name="Liu Y."/>
            <person name="Qin X."/>
            <person name="Cawley S."/>
            <person name="Cooney A.J."/>
            <person name="D'Souza L.M."/>
            <person name="Martin K."/>
            <person name="Wu J.Q."/>
            <person name="Gonzalez-Garay M.L."/>
            <person name="Jackson A.R."/>
            <person name="Kalafus K.J."/>
            <person name="McLeod M.P."/>
            <person name="Milosavljevic A."/>
            <person name="Virk D."/>
            <person name="Volkov A."/>
            <person name="Wheeler D.A."/>
            <person name="Zhang Z."/>
            <person name="Bailey J.A."/>
            <person name="Eichler E.E."/>
            <person name="Tuzun E."/>
            <person name="Birney E."/>
            <person name="Mongin E."/>
            <person name="Ureta-Vidal A."/>
            <person name="Woodwark C."/>
            <person name="Zdobnov E."/>
            <person name="Bork P."/>
            <person name="Suyama M."/>
            <person name="Torrents D."/>
            <person name="Alexandersson M."/>
            <person name="Trask B.J."/>
            <person name="Young J.M."/>
            <person name="Huang H."/>
            <person name="Wang H."/>
            <person name="Xing H."/>
            <person name="Daniels S."/>
            <person name="Gietzen D."/>
            <person name="Schmidt J."/>
            <person name="Stevens K."/>
            <person name="Vitt U."/>
            <person name="Wingrove J."/>
            <person name="Camara F."/>
            <person name="Mar Alba M."/>
            <person name="Abril J.F."/>
            <person name="Guigo R."/>
            <person name="Smit A."/>
            <person name="Dubchak I."/>
            <person name="Rubin E.M."/>
            <person name="Couronne O."/>
            <person name="Poliakov A."/>
            <person name="Huebner N."/>
            <person name="Ganten D."/>
            <person name="Goesele C."/>
            <person name="Hummel O."/>
            <person name="Kreitler T."/>
            <person name="Lee Y.-A."/>
            <person name="Monti J."/>
            <person name="Schulz H."/>
            <person name="Zimdahl H."/>
            <person name="Himmelbauer H."/>
            <person name="Lehrach H."/>
            <person name="Jacob H.J."/>
            <person name="Bromberg S."/>
            <person name="Gullings-Handley J."/>
            <person name="Jensen-Seaman M.I."/>
            <person name="Kwitek A.E."/>
            <person name="Lazar J."/>
            <person name="Pasko D."/>
            <person name="Tonellato P.J."/>
            <person name="Twigger S."/>
            <person name="Ponting C.P."/>
            <person name="Duarte J.M."/>
            <person name="Rice S."/>
            <person name="Goodstadt L."/>
            <person name="Beatson S.A."/>
            <person name="Emes R.D."/>
            <person name="Winter E.E."/>
            <person name="Webber C."/>
            <person name="Brandt P."/>
            <person name="Nyakatura G."/>
            <person name="Adetobi M."/>
            <person name="Chiaromonte F."/>
            <person name="Elnitski L."/>
            <person name="Eswara P."/>
            <person name="Hardison R.C."/>
            <person name="Hou M."/>
            <person name="Kolbe D."/>
            <person name="Makova K."/>
            <person name="Miller W."/>
            <person name="Nekrutenko A."/>
            <person name="Riemer C."/>
            <person name="Schwartz S."/>
            <person name="Taylor J."/>
            <person name="Yang S."/>
            <person name="Zhang Y."/>
            <person name="Lindpaintner K."/>
            <person name="Andrews T.D."/>
            <person name="Caccamo M."/>
            <person name="Clamp M."/>
            <person name="Clarke L."/>
            <person name="Curwen V."/>
            <person name="Durbin R.M."/>
            <person name="Eyras E."/>
            <person name="Searle S.M."/>
            <person name="Cooper G.M."/>
            <person name="Batzoglou S."/>
            <person name="Brudno M."/>
            <person name="Sidow A."/>
            <person name="Stone E.A."/>
            <person name="Payseur B.A."/>
            <person name="Bourque G."/>
            <person name="Lopez-Otin C."/>
            <person name="Puente X.S."/>
            <person name="Chakrabarti K."/>
            <person name="Chatterji S."/>
            <person name="Dewey C."/>
            <person name="Pachter L."/>
            <person name="Bray N."/>
            <person name="Yap V.B."/>
            <person name="Caspi A."/>
            <person name="Tesler G."/>
            <person name="Pevzner P.A."/>
            <person name="Haussler D."/>
            <person name="Roskin K.M."/>
            <person name="Baertsch R."/>
            <person name="Clawson H."/>
            <person name="Furey T.S."/>
            <person name="Hinrichs A.S."/>
            <person name="Karolchik D."/>
            <person name="Kent W.J."/>
            <person name="Rosenbloom K.R."/>
            <person name="Trumbower H."/>
            <person name="Weirauch M."/>
            <person name="Cooper D.N."/>
            <person name="Stenson P.D."/>
            <person name="Ma B."/>
            <person name="Brent M."/>
            <person name="Arumugam M."/>
            <person name="Shteynberg D."/>
            <person name="Copley R.R."/>
            <person name="Taylor M.S."/>
            <person name="Riethman H."/>
            <person name="Mudunuri U."/>
            <person name="Peterson J."/>
            <person name="Guyer M."/>
            <person name="Felsenfeld A."/>
            <person name="Old S."/>
            <person name="Mockrin S."/>
            <person name="Collins F.S."/>
        </authorList>
    </citation>
    <scope>NUCLEOTIDE SEQUENCE [LARGE SCALE GENOMIC DNA]</scope>
    <source>
        <strain>Brown Norway</strain>
    </source>
</reference>
<reference key="3">
    <citation type="submission" date="2005-07" db="EMBL/GenBank/DDBJ databases">
        <authorList>
            <person name="Mural R.J."/>
            <person name="Adams M.D."/>
            <person name="Myers E.W."/>
            <person name="Smith H.O."/>
            <person name="Venter J.C."/>
        </authorList>
    </citation>
    <scope>NUCLEOTIDE SEQUENCE [LARGE SCALE GENOMIC DNA]</scope>
    <source>
        <strain evidence="11">Brown Norway</strain>
    </source>
</reference>
<reference key="4">
    <citation type="journal article" date="2007" name="Brain Res. Bull.">
        <title>Neuromedin C microinjected into the amygdala inhibits feeding.</title>
        <authorList>
            <person name="Fekete E.M."/>
            <person name="Bagi E.E."/>
            <person name="Toth K."/>
            <person name="Lenard L."/>
        </authorList>
    </citation>
    <scope>FUNCTION</scope>
</reference>
<reference key="5">
    <citation type="journal article" date="2016" name="Nature">
        <title>The peptidergic control circuit for sighing.</title>
        <authorList>
            <person name="Li P."/>
            <person name="Janczewski W.A."/>
            <person name="Yackle K."/>
            <person name="Kam K."/>
            <person name="Pagliardini S."/>
            <person name="Krasnow M.A."/>
            <person name="Feldman J.L."/>
        </authorList>
    </citation>
    <scope>TISSUE SPECIFICITY</scope>
</reference>
<reference key="6">
    <citation type="journal article" date="2020" name="Neuropeptides">
        <title>The effects of gastrin-releasing peptide on the voltage-gated channels in rat hippocampal neurons.</title>
        <authorList>
            <person name="Yang J."/>
            <person name="Yang X."/>
            <person name="Xiao X."/>
            <person name="Ming D."/>
        </authorList>
    </citation>
    <scope>FUNCTION</scope>
</reference>
<evidence type="ECO:0000250" key="1">
    <source>
        <dbReference type="UniProtKB" id="P07492"/>
    </source>
</evidence>
<evidence type="ECO:0000250" key="2">
    <source>
        <dbReference type="UniProtKB" id="P08989"/>
    </source>
</evidence>
<evidence type="ECO:0000250" key="3">
    <source>
        <dbReference type="UniProtKB" id="P63153"/>
    </source>
</evidence>
<evidence type="ECO:0000250" key="4">
    <source>
        <dbReference type="UniProtKB" id="Q863C3"/>
    </source>
</evidence>
<evidence type="ECO:0000250" key="5">
    <source>
        <dbReference type="UniProtKB" id="Q8R1I2"/>
    </source>
</evidence>
<evidence type="ECO:0000256" key="6">
    <source>
        <dbReference type="SAM" id="MobiDB-lite"/>
    </source>
</evidence>
<evidence type="ECO:0000269" key="7">
    <source>
    </source>
</evidence>
<evidence type="ECO:0000269" key="8">
    <source>
    </source>
</evidence>
<evidence type="ECO:0000269" key="9">
    <source>
    </source>
</evidence>
<evidence type="ECO:0000305" key="10"/>
<evidence type="ECO:0000312" key="11">
    <source>
        <dbReference type="EMBL" id="EDM14697.1"/>
    </source>
</evidence>
<proteinExistence type="evidence at protein level"/>
<name>GRP_RAT</name>
<keyword id="KW-0027">Amidation</keyword>
<keyword id="KW-0966">Cell projection</keyword>
<keyword id="KW-0165">Cleavage on pair of basic residues</keyword>
<keyword id="KW-0968">Cytoplasmic vesicle</keyword>
<keyword id="KW-0467">Mast cell degranulation</keyword>
<keyword id="KW-1185">Reference proteome</keyword>
<keyword id="KW-0964">Secreted</keyword>
<keyword id="KW-0732">Signal</keyword>
<organism>
    <name type="scientific">Rattus norvegicus</name>
    <name type="common">Rat</name>
    <dbReference type="NCBI Taxonomy" id="10116"/>
    <lineage>
        <taxon>Eukaryota</taxon>
        <taxon>Metazoa</taxon>
        <taxon>Chordata</taxon>
        <taxon>Craniata</taxon>
        <taxon>Vertebrata</taxon>
        <taxon>Euteleostomi</taxon>
        <taxon>Mammalia</taxon>
        <taxon>Eutheria</taxon>
        <taxon>Euarchontoglires</taxon>
        <taxon>Glires</taxon>
        <taxon>Rodentia</taxon>
        <taxon>Myomorpha</taxon>
        <taxon>Muroidea</taxon>
        <taxon>Muridae</taxon>
        <taxon>Murinae</taxon>
        <taxon>Rattus</taxon>
    </lineage>
</organism>
<accession>P24393</accession>
<accession>G3V871</accession>
<gene>
    <name type="primary">Grp</name>
</gene>